<gene>
    <name evidence="1" type="primary">mutL</name>
    <name type="ordered locus">BPUM_1609</name>
</gene>
<keyword id="KW-0227">DNA damage</keyword>
<keyword id="KW-0234">DNA repair</keyword>
<dbReference type="EMBL" id="CP000813">
    <property type="protein sequence ID" value="ABV62291.1"/>
    <property type="molecule type" value="Genomic_DNA"/>
</dbReference>
<dbReference type="RefSeq" id="WP_012010028.1">
    <property type="nucleotide sequence ID" value="NC_009848.4"/>
</dbReference>
<dbReference type="SMR" id="A8FDH4"/>
<dbReference type="STRING" id="315750.BPUM_1609"/>
<dbReference type="GeneID" id="5620871"/>
<dbReference type="KEGG" id="bpu:BPUM_1609"/>
<dbReference type="eggNOG" id="COG0323">
    <property type="taxonomic scope" value="Bacteria"/>
</dbReference>
<dbReference type="HOGENOM" id="CLU_004131_4_1_9"/>
<dbReference type="OrthoDB" id="9763467at2"/>
<dbReference type="Proteomes" id="UP000001355">
    <property type="component" value="Chromosome"/>
</dbReference>
<dbReference type="GO" id="GO:0032300">
    <property type="term" value="C:mismatch repair complex"/>
    <property type="evidence" value="ECO:0007669"/>
    <property type="project" value="InterPro"/>
</dbReference>
<dbReference type="GO" id="GO:0005524">
    <property type="term" value="F:ATP binding"/>
    <property type="evidence" value="ECO:0007669"/>
    <property type="project" value="InterPro"/>
</dbReference>
<dbReference type="GO" id="GO:0016887">
    <property type="term" value="F:ATP hydrolysis activity"/>
    <property type="evidence" value="ECO:0007669"/>
    <property type="project" value="InterPro"/>
</dbReference>
<dbReference type="GO" id="GO:0140664">
    <property type="term" value="F:ATP-dependent DNA damage sensor activity"/>
    <property type="evidence" value="ECO:0007669"/>
    <property type="project" value="InterPro"/>
</dbReference>
<dbReference type="GO" id="GO:0030983">
    <property type="term" value="F:mismatched DNA binding"/>
    <property type="evidence" value="ECO:0007669"/>
    <property type="project" value="InterPro"/>
</dbReference>
<dbReference type="GO" id="GO:0006298">
    <property type="term" value="P:mismatch repair"/>
    <property type="evidence" value="ECO:0007669"/>
    <property type="project" value="UniProtKB-UniRule"/>
</dbReference>
<dbReference type="CDD" id="cd16926">
    <property type="entry name" value="HATPase_MutL-MLH-PMS-like"/>
    <property type="match status" value="1"/>
</dbReference>
<dbReference type="CDD" id="cd00782">
    <property type="entry name" value="MutL_Trans"/>
    <property type="match status" value="1"/>
</dbReference>
<dbReference type="FunFam" id="3.30.1370.100:FF:000004">
    <property type="entry name" value="DNA mismatch repair endonuclease MutL"/>
    <property type="match status" value="1"/>
</dbReference>
<dbReference type="FunFam" id="3.30.565.10:FF:000003">
    <property type="entry name" value="DNA mismatch repair endonuclease MutL"/>
    <property type="match status" value="1"/>
</dbReference>
<dbReference type="Gene3D" id="3.30.230.10">
    <property type="match status" value="1"/>
</dbReference>
<dbReference type="Gene3D" id="3.30.565.10">
    <property type="entry name" value="Histidine kinase-like ATPase, C-terminal domain"/>
    <property type="match status" value="1"/>
</dbReference>
<dbReference type="Gene3D" id="3.30.1540.20">
    <property type="entry name" value="MutL, C-terminal domain, dimerisation subdomain"/>
    <property type="match status" value="1"/>
</dbReference>
<dbReference type="Gene3D" id="3.30.1370.100">
    <property type="entry name" value="MutL, C-terminal domain, regulatory subdomain"/>
    <property type="match status" value="1"/>
</dbReference>
<dbReference type="HAMAP" id="MF_00149">
    <property type="entry name" value="DNA_mis_repair"/>
    <property type="match status" value="1"/>
</dbReference>
<dbReference type="InterPro" id="IPR014762">
    <property type="entry name" value="DNA_mismatch_repair_CS"/>
</dbReference>
<dbReference type="InterPro" id="IPR020667">
    <property type="entry name" value="DNA_mismatch_repair_MutL"/>
</dbReference>
<dbReference type="InterPro" id="IPR013507">
    <property type="entry name" value="DNA_mismatch_S5_2-like"/>
</dbReference>
<dbReference type="InterPro" id="IPR036890">
    <property type="entry name" value="HATPase_C_sf"/>
</dbReference>
<dbReference type="InterPro" id="IPR002099">
    <property type="entry name" value="MutL/Mlh/PMS"/>
</dbReference>
<dbReference type="InterPro" id="IPR038973">
    <property type="entry name" value="MutL/Mlh/Pms-like"/>
</dbReference>
<dbReference type="InterPro" id="IPR014790">
    <property type="entry name" value="MutL_C"/>
</dbReference>
<dbReference type="InterPro" id="IPR042120">
    <property type="entry name" value="MutL_C_dimsub"/>
</dbReference>
<dbReference type="InterPro" id="IPR042121">
    <property type="entry name" value="MutL_C_regsub"/>
</dbReference>
<dbReference type="InterPro" id="IPR037198">
    <property type="entry name" value="MutL_C_sf"/>
</dbReference>
<dbReference type="InterPro" id="IPR020568">
    <property type="entry name" value="Ribosomal_Su5_D2-typ_SF"/>
</dbReference>
<dbReference type="InterPro" id="IPR014721">
    <property type="entry name" value="Ribsml_uS5_D2-typ_fold_subgr"/>
</dbReference>
<dbReference type="NCBIfam" id="TIGR00585">
    <property type="entry name" value="mutl"/>
    <property type="match status" value="1"/>
</dbReference>
<dbReference type="NCBIfam" id="NF000950">
    <property type="entry name" value="PRK00095.1-3"/>
    <property type="match status" value="1"/>
</dbReference>
<dbReference type="PANTHER" id="PTHR10073">
    <property type="entry name" value="DNA MISMATCH REPAIR PROTEIN MLH, PMS, MUTL"/>
    <property type="match status" value="1"/>
</dbReference>
<dbReference type="PANTHER" id="PTHR10073:SF12">
    <property type="entry name" value="DNA MISMATCH REPAIR PROTEIN MLH1"/>
    <property type="match status" value="1"/>
</dbReference>
<dbReference type="Pfam" id="PF01119">
    <property type="entry name" value="DNA_mis_repair"/>
    <property type="match status" value="1"/>
</dbReference>
<dbReference type="Pfam" id="PF13589">
    <property type="entry name" value="HATPase_c_3"/>
    <property type="match status" value="1"/>
</dbReference>
<dbReference type="Pfam" id="PF08676">
    <property type="entry name" value="MutL_C"/>
    <property type="match status" value="1"/>
</dbReference>
<dbReference type="SMART" id="SM01340">
    <property type="entry name" value="DNA_mis_repair"/>
    <property type="match status" value="1"/>
</dbReference>
<dbReference type="SMART" id="SM00853">
    <property type="entry name" value="MutL_C"/>
    <property type="match status" value="1"/>
</dbReference>
<dbReference type="SUPFAM" id="SSF55874">
    <property type="entry name" value="ATPase domain of HSP90 chaperone/DNA topoisomerase II/histidine kinase"/>
    <property type="match status" value="1"/>
</dbReference>
<dbReference type="SUPFAM" id="SSF118116">
    <property type="entry name" value="DNA mismatch repair protein MutL"/>
    <property type="match status" value="1"/>
</dbReference>
<dbReference type="SUPFAM" id="SSF54211">
    <property type="entry name" value="Ribosomal protein S5 domain 2-like"/>
    <property type="match status" value="1"/>
</dbReference>
<dbReference type="PROSITE" id="PS00058">
    <property type="entry name" value="DNA_MISMATCH_REPAIR_1"/>
    <property type="match status" value="1"/>
</dbReference>
<evidence type="ECO:0000255" key="1">
    <source>
        <dbReference type="HAMAP-Rule" id="MF_00149"/>
    </source>
</evidence>
<accession>A8FDH4</accession>
<organism>
    <name type="scientific">Bacillus pumilus (strain SAFR-032)</name>
    <dbReference type="NCBI Taxonomy" id="315750"/>
    <lineage>
        <taxon>Bacteria</taxon>
        <taxon>Bacillati</taxon>
        <taxon>Bacillota</taxon>
        <taxon>Bacilli</taxon>
        <taxon>Bacillales</taxon>
        <taxon>Bacillaceae</taxon>
        <taxon>Bacillus</taxon>
    </lineage>
</organism>
<name>MUTL_BACP2</name>
<comment type="function">
    <text evidence="1">This protein is involved in the repair of mismatches in DNA. It is required for dam-dependent methyl-directed DNA mismatch repair. May act as a 'molecular matchmaker', a protein that promotes the formation of a stable complex between two or more DNA-binding proteins in an ATP-dependent manner without itself being part of a final effector complex.</text>
</comment>
<comment type="similarity">
    <text evidence="1">Belongs to the DNA mismatch repair MutL/HexB family.</text>
</comment>
<proteinExistence type="inferred from homology"/>
<reference key="1">
    <citation type="journal article" date="2007" name="PLoS ONE">
        <title>Paradoxical DNA repair and peroxide resistance gene conservation in Bacillus pumilus SAFR-032.</title>
        <authorList>
            <person name="Gioia J."/>
            <person name="Yerrapragada S."/>
            <person name="Qin X."/>
            <person name="Jiang H."/>
            <person name="Igboeli O.C."/>
            <person name="Muzny D."/>
            <person name="Dugan-Rocha S."/>
            <person name="Ding Y."/>
            <person name="Hawes A."/>
            <person name="Liu W."/>
            <person name="Perez L."/>
            <person name="Kovar C."/>
            <person name="Dinh H."/>
            <person name="Lee S."/>
            <person name="Nazareth L."/>
            <person name="Blyth P."/>
            <person name="Holder M."/>
            <person name="Buhay C."/>
            <person name="Tirumalai M.R."/>
            <person name="Liu Y."/>
            <person name="Dasgupta I."/>
            <person name="Bokhetache L."/>
            <person name="Fujita M."/>
            <person name="Karouia F."/>
            <person name="Eswara Moorthy P."/>
            <person name="Siefert J."/>
            <person name="Uzman A."/>
            <person name="Buzumbo P."/>
            <person name="Verma A."/>
            <person name="Zwiya H."/>
            <person name="McWilliams B.D."/>
            <person name="Olowu A."/>
            <person name="Clinkenbeard K.D."/>
            <person name="Newcombe D."/>
            <person name="Golebiewski L."/>
            <person name="Petrosino J.F."/>
            <person name="Nicholson W.L."/>
            <person name="Fox G.E."/>
            <person name="Venkateswaran K."/>
            <person name="Highlander S.K."/>
            <person name="Weinstock G.M."/>
        </authorList>
    </citation>
    <scope>NUCLEOTIDE SEQUENCE [LARGE SCALE GENOMIC DNA]</scope>
    <source>
        <strain>SAFR-032</strain>
    </source>
</reference>
<sequence length="633" mass="71422">MAKIIQLSDDLSNKIAAGEVVERPASVVKELMENAIDASSTVVEIDVEEAGLSSIRMIDNGVGIDAEDCKLAFQRHATSKIKDENDLFRVRTLGFRGEALPSIASVSHLEMKTSTGEGAGTHLVLQGGKIISEKKTSGRRGTEIVVTNLFYNTPARLKYMKTVHTELGNISDVVNRIALAHPEVSIRLRHQGKVLLQTNGNGDVRHVLAAIYGTAVAKKMVPLHVQSLDFEVKGYISLPEVTRASRNYMSSVVNGRYVKHFPLVKAVHEGYHTLLPIGRHPITFIEMKMDPILVDVNVHPSKLEVRLSKEQELHELIKQGIKDVFQKQQLIPSASVPKKAPMPAIKNEQQSLTFDAKKGNTNEMETPLSYEPEPLESVVYETNQMSTYGMPVQEMTGASSPVFREDAPSERVHKEESAASLEYEESVLREDDAEAISENERVPVMYPIGQMHGTYILAQNERGLYIIDQHAAQERIKYEYYREKVGEIEQEVQEMLVPLTFHYSKNDMLIIEEHKEILTKVGVFLEPFGSGSYIVRSHPQWFPKGEEAELIEEIIEQVLVEKRVDIKKLREEAAIMMSCKGSIKANRHLRNDEIKALLDELRQTKDPFTCPHGRPIIIHHSTYEMEKMFKRVM</sequence>
<feature type="chain" id="PRO_1000058135" description="DNA mismatch repair protein MutL">
    <location>
        <begin position="1"/>
        <end position="633"/>
    </location>
</feature>
<protein>
    <recommendedName>
        <fullName evidence="1">DNA mismatch repair protein MutL</fullName>
    </recommendedName>
</protein>